<accession>C4ZQP2</accession>
<protein>
    <recommendedName>
        <fullName evidence="1">Protein-methionine-sulfoxide reductase heme-binding subunit MsrQ</fullName>
    </recommendedName>
    <alternativeName>
        <fullName evidence="1">Flavocytochrome MsrQ</fullName>
    </alternativeName>
</protein>
<organism>
    <name type="scientific">Escherichia coli (strain K12 / MC4100 / BW2952)</name>
    <dbReference type="NCBI Taxonomy" id="595496"/>
    <lineage>
        <taxon>Bacteria</taxon>
        <taxon>Pseudomonadati</taxon>
        <taxon>Pseudomonadota</taxon>
        <taxon>Gammaproteobacteria</taxon>
        <taxon>Enterobacterales</taxon>
        <taxon>Enterobacteriaceae</taxon>
        <taxon>Escherichia</taxon>
    </lineage>
</organism>
<reference key="1">
    <citation type="journal article" date="2009" name="J. Bacteriol.">
        <title>Genomic sequencing reveals regulatory mutations and recombinational events in the widely used MC4100 lineage of Escherichia coli K-12.</title>
        <authorList>
            <person name="Ferenci T."/>
            <person name="Zhou Z."/>
            <person name="Betteridge T."/>
            <person name="Ren Y."/>
            <person name="Liu Y."/>
            <person name="Feng L."/>
            <person name="Reeves P.R."/>
            <person name="Wang L."/>
        </authorList>
    </citation>
    <scope>NUCLEOTIDE SEQUENCE [LARGE SCALE GENOMIC DNA]</scope>
    <source>
        <strain>K12 / MC4100 / BW2952</strain>
    </source>
</reference>
<feature type="chain" id="PRO_1000213852" description="Protein-methionine-sulfoxide reductase heme-binding subunit MsrQ">
    <location>
        <begin position="1"/>
        <end position="211"/>
    </location>
</feature>
<feature type="transmembrane region" description="Helical" evidence="1">
    <location>
        <begin position="10"/>
        <end position="30"/>
    </location>
</feature>
<feature type="transmembrane region" description="Helical" evidence="1">
    <location>
        <begin position="82"/>
        <end position="102"/>
    </location>
</feature>
<feature type="transmembrane region" description="Helical" evidence="1">
    <location>
        <begin position="116"/>
        <end position="136"/>
    </location>
</feature>
<feature type="transmembrane region" description="Helical" evidence="1">
    <location>
        <begin position="153"/>
        <end position="173"/>
    </location>
</feature>
<keyword id="KW-0997">Cell inner membrane</keyword>
<keyword id="KW-1003">Cell membrane</keyword>
<keyword id="KW-0249">Electron transport</keyword>
<keyword id="KW-0285">Flavoprotein</keyword>
<keyword id="KW-0288">FMN</keyword>
<keyword id="KW-0349">Heme</keyword>
<keyword id="KW-0408">Iron</keyword>
<keyword id="KW-0472">Membrane</keyword>
<keyword id="KW-0479">Metal-binding</keyword>
<keyword id="KW-0812">Transmembrane</keyword>
<keyword id="KW-1133">Transmembrane helix</keyword>
<keyword id="KW-0813">Transport</keyword>
<evidence type="ECO:0000255" key="1">
    <source>
        <dbReference type="HAMAP-Rule" id="MF_01207"/>
    </source>
</evidence>
<proteinExistence type="inferred from homology"/>
<dbReference type="EMBL" id="CP001396">
    <property type="protein sequence ID" value="ACR62224.1"/>
    <property type="molecule type" value="Genomic_DNA"/>
</dbReference>
<dbReference type="RefSeq" id="WP_001240091.1">
    <property type="nucleotide sequence ID" value="NC_012759.1"/>
</dbReference>
<dbReference type="KEGG" id="ebw:BWG_1773"/>
<dbReference type="HOGENOM" id="CLU_080662_1_0_6"/>
<dbReference type="GO" id="GO:0005886">
    <property type="term" value="C:plasma membrane"/>
    <property type="evidence" value="ECO:0007669"/>
    <property type="project" value="UniProtKB-SubCell"/>
</dbReference>
<dbReference type="GO" id="GO:0009055">
    <property type="term" value="F:electron transfer activity"/>
    <property type="evidence" value="ECO:0007669"/>
    <property type="project" value="UniProtKB-UniRule"/>
</dbReference>
<dbReference type="GO" id="GO:0010181">
    <property type="term" value="F:FMN binding"/>
    <property type="evidence" value="ECO:0007669"/>
    <property type="project" value="UniProtKB-UniRule"/>
</dbReference>
<dbReference type="GO" id="GO:0020037">
    <property type="term" value="F:heme binding"/>
    <property type="evidence" value="ECO:0007669"/>
    <property type="project" value="UniProtKB-UniRule"/>
</dbReference>
<dbReference type="GO" id="GO:0046872">
    <property type="term" value="F:metal ion binding"/>
    <property type="evidence" value="ECO:0007669"/>
    <property type="project" value="UniProtKB-KW"/>
</dbReference>
<dbReference type="GO" id="GO:0016679">
    <property type="term" value="F:oxidoreductase activity, acting on diphenols and related substances as donors"/>
    <property type="evidence" value="ECO:0007669"/>
    <property type="project" value="TreeGrafter"/>
</dbReference>
<dbReference type="GO" id="GO:0030091">
    <property type="term" value="P:protein repair"/>
    <property type="evidence" value="ECO:0007669"/>
    <property type="project" value="UniProtKB-UniRule"/>
</dbReference>
<dbReference type="HAMAP" id="MF_01207">
    <property type="entry name" value="MsrQ"/>
    <property type="match status" value="1"/>
</dbReference>
<dbReference type="InterPro" id="IPR013130">
    <property type="entry name" value="Fe3_Rdtase_TM_dom"/>
</dbReference>
<dbReference type="InterPro" id="IPR022837">
    <property type="entry name" value="MsrQ-like"/>
</dbReference>
<dbReference type="NCBIfam" id="NF003830">
    <property type="entry name" value="PRK05419.1-1"/>
    <property type="match status" value="1"/>
</dbReference>
<dbReference type="NCBIfam" id="NF003831">
    <property type="entry name" value="PRK05419.1-2"/>
    <property type="match status" value="1"/>
</dbReference>
<dbReference type="NCBIfam" id="NF003832">
    <property type="entry name" value="PRK05419.1-4"/>
    <property type="match status" value="1"/>
</dbReference>
<dbReference type="PANTHER" id="PTHR36964">
    <property type="entry name" value="PROTEIN-METHIONINE-SULFOXIDE REDUCTASE HEME-BINDING SUBUNIT MSRQ"/>
    <property type="match status" value="1"/>
</dbReference>
<dbReference type="PANTHER" id="PTHR36964:SF1">
    <property type="entry name" value="PROTEIN-METHIONINE-SULFOXIDE REDUCTASE HEME-BINDING SUBUNIT MSRQ"/>
    <property type="match status" value="1"/>
</dbReference>
<dbReference type="Pfam" id="PF01794">
    <property type="entry name" value="Ferric_reduct"/>
    <property type="match status" value="1"/>
</dbReference>
<gene>
    <name evidence="1" type="primary">msrQ</name>
    <name type="ordered locus">BWG_1773</name>
</gene>
<name>MSRQ_ECOBW</name>
<sequence>MRLTAKQVTWLKVCLHLAGLLPFLWLVWAINHGGLGADPVKDIQHFTGRTALKFLLATLLITPLARYAKQPLLIRTRRLLGLWCFAWATLHLTSYALLELGVNNLALLGKELITRPYLTLGIISWVILLALAFTSTQAMQRKLGKHWQQLHNFVYLVAILAPIHYLWSVKIISPQPLIYAGLAVLLLALRYKKLRSLFNRLRKQVHNKLSV</sequence>
<comment type="function">
    <text evidence="1">Part of the MsrPQ system that repairs oxidized periplasmic proteins containing methionine sulfoxide residues (Met-O), using respiratory chain electrons. Thus protects these proteins from oxidative-stress damage caused by reactive species of oxygen and chlorine generated by the host defense mechanisms. MsrPQ is essential for the maintenance of envelope integrity under bleach stress, rescuing a wide series of structurally unrelated periplasmic proteins from methionine oxidation, including the primary periplasmic chaperone SurA and the lipoprotein Pal. MsrQ provides electrons for reduction to the reductase catalytic subunit MsrP, using the quinone pool of the respiratory chain.</text>
</comment>
<comment type="cofactor">
    <cofactor evidence="1">
        <name>FMN</name>
        <dbReference type="ChEBI" id="CHEBI:58210"/>
    </cofactor>
    <text evidence="1">Binds 1 FMN per subunit.</text>
</comment>
<comment type="cofactor">
    <cofactor evidence="1">
        <name>heme b</name>
        <dbReference type="ChEBI" id="CHEBI:60344"/>
    </cofactor>
    <text evidence="1">Binds 1 heme b (iron(II)-protoporphyrin IX) group per subunit.</text>
</comment>
<comment type="subunit">
    <text evidence="1">Heterodimer of a catalytic subunit (MsrP) and a heme-binding subunit (MsrQ).</text>
</comment>
<comment type="subcellular location">
    <subcellularLocation>
        <location evidence="1">Cell inner membrane</location>
        <topology evidence="1">Multi-pass membrane protein</topology>
    </subcellularLocation>
</comment>
<comment type="similarity">
    <text evidence="1">Belongs to the MsrQ family.</text>
</comment>